<keyword id="KW-1185">Reference proteome</keyword>
<accession>A5VL01</accession>
<comment type="similarity">
    <text evidence="1">Belongs to the UPF0342 family.</text>
</comment>
<name>Y1268_LIMRD</name>
<proteinExistence type="inferred from homology"/>
<evidence type="ECO:0000255" key="1">
    <source>
        <dbReference type="HAMAP-Rule" id="MF_01526"/>
    </source>
</evidence>
<organism>
    <name type="scientific">Limosilactobacillus reuteri (strain DSM 20016)</name>
    <name type="common">Lactobacillus reuteri</name>
    <dbReference type="NCBI Taxonomy" id="557436"/>
    <lineage>
        <taxon>Bacteria</taxon>
        <taxon>Bacillati</taxon>
        <taxon>Bacillota</taxon>
        <taxon>Bacilli</taxon>
        <taxon>Lactobacillales</taxon>
        <taxon>Lactobacillaceae</taxon>
        <taxon>Limosilactobacillus</taxon>
    </lineage>
</organism>
<feature type="chain" id="PRO_1000068659" description="UPF0342 protein Lreu_1268">
    <location>
        <begin position="1"/>
        <end position="123"/>
    </location>
</feature>
<reference key="1">
    <citation type="journal article" date="2011" name="PLoS Genet.">
        <title>The evolution of host specialization in the vertebrate gut symbiont Lactobacillus reuteri.</title>
        <authorList>
            <person name="Frese S.A."/>
            <person name="Benson A.K."/>
            <person name="Tannock G.W."/>
            <person name="Loach D.M."/>
            <person name="Kim J."/>
            <person name="Zhang M."/>
            <person name="Oh P.L."/>
            <person name="Heng N.C."/>
            <person name="Patil P.B."/>
            <person name="Juge N."/>
            <person name="Mackenzie D.A."/>
            <person name="Pearson B.M."/>
            <person name="Lapidus A."/>
            <person name="Dalin E."/>
            <person name="Tice H."/>
            <person name="Goltsman E."/>
            <person name="Land M."/>
            <person name="Hauser L."/>
            <person name="Ivanova N."/>
            <person name="Kyrpides N.C."/>
            <person name="Walter J."/>
        </authorList>
    </citation>
    <scope>NUCLEOTIDE SEQUENCE [LARGE SCALE GENOMIC DNA]</scope>
    <source>
        <strain>DSM 20016</strain>
    </source>
</reference>
<dbReference type="EMBL" id="CP000705">
    <property type="protein sequence ID" value="ABQ83525.1"/>
    <property type="molecule type" value="Genomic_DNA"/>
</dbReference>
<dbReference type="RefSeq" id="WP_003668516.1">
    <property type="nucleotide sequence ID" value="NC_009513.1"/>
</dbReference>
<dbReference type="SMR" id="A5VL01"/>
<dbReference type="STRING" id="557436.Lreu_1268"/>
<dbReference type="KEGG" id="lre:Lreu_1268"/>
<dbReference type="PATRIC" id="fig|557436.17.peg.595"/>
<dbReference type="eggNOG" id="COG3679">
    <property type="taxonomic scope" value="Bacteria"/>
</dbReference>
<dbReference type="HOGENOM" id="CLU_140243_3_1_9"/>
<dbReference type="Proteomes" id="UP000001991">
    <property type="component" value="Chromosome"/>
</dbReference>
<dbReference type="Gene3D" id="1.20.1500.10">
    <property type="entry name" value="YheA/YmcA-like"/>
    <property type="match status" value="1"/>
</dbReference>
<dbReference type="HAMAP" id="MF_01526">
    <property type="entry name" value="UPF0342"/>
    <property type="match status" value="1"/>
</dbReference>
<dbReference type="InterPro" id="IPR010368">
    <property type="entry name" value="Com_YlbF"/>
</dbReference>
<dbReference type="InterPro" id="IPR023378">
    <property type="entry name" value="YheA/YmcA-like_dom_sf"/>
</dbReference>
<dbReference type="Pfam" id="PF06133">
    <property type="entry name" value="Com_YlbF"/>
    <property type="match status" value="1"/>
</dbReference>
<dbReference type="SUPFAM" id="SSF158622">
    <property type="entry name" value="YheA/YmcA-like"/>
    <property type="match status" value="1"/>
</dbReference>
<protein>
    <recommendedName>
        <fullName evidence="1">UPF0342 protein Lreu_1268</fullName>
    </recommendedName>
</protein>
<gene>
    <name type="ordered locus">Lreu_1268</name>
</gene>
<sequence length="123" mass="14096">MVVNIYDTANELSRQLRETQEYQGLQKAFEALKADGDTFDTFKKFQQAQADAQHKQMTGQQPTDDEIKNIQNLAKEVSGKKVVQDLMNQERQVDSMLQQLNKTITSPIQDLYSEVMPKMPGQE</sequence>